<comment type="function">
    <text evidence="1">Molecular chaperone. Has ATPase activity.</text>
</comment>
<comment type="subunit">
    <text evidence="1">Homodimer.</text>
</comment>
<comment type="subcellular location">
    <subcellularLocation>
        <location evidence="1">Cytoplasm</location>
    </subcellularLocation>
</comment>
<comment type="similarity">
    <text evidence="1">Belongs to the heat shock protein 90 family.</text>
</comment>
<sequence length="628" mass="72331">MSEKKYTFETEVDKLLHLVIHSLYSNREIFLRELVSNSSDAIEKLRYESISNAALNEDDTDYAIRIDFDKDAKTITVSDNGIGMTEEEVIENLGTIAKSGTKKFLESLTGDKSKDNELIGQFGVGFYSSFIVADKVTVRTRKAGQDKSQATKWVSDAQNGFTVETITKEKRGTEVILHIKKEHLDLLEYHVLKGLVNKYSDCINTPIQMKKVEYDKDGKQTVKDEYETVNNTKAIWLRSKDEVTDEEYQEFYKYISHDFADALMWIHNKVEGNLEYNSLLYIPQNKPFDFWNRDKDYGLSLYVRRVFIMENKELLPPYLRFVKGVIDSADLPLNVSREILQHNKVIDKIKKAITTKILSELKKLASKDKEKYQKFWDSFGQVLKEGVSDDYSNKEKIAGLLRFATTQSGDSKQTVSLADYISRMKEGQDTIYYITSDSYKAAANNPQLEAFKKKGIEVILMTDRIDEWMMSTLTEFDGKHMKSIIKGDIDLDKFETPENKEKFEKETKDFEKVLKEIKEVLKDKVEDVRLSKRLTDSPSCVVVNDYGMSLHMQKMMEEAGQGFMPGMGMKPILELNAEHNLVQKLKNEADTEIFADLSELLLLQAMFVEGAKIEDPMAFVKLVNKYIR</sequence>
<gene>
    <name evidence="1" type="primary">htpG</name>
    <name type="ordered locus">FTN_0266</name>
</gene>
<accession>A0Q4L0</accession>
<reference key="1">
    <citation type="journal article" date="2007" name="Genome Biol.">
        <title>Comparison of Francisella tularensis genomes reveals evolutionary events associated with the emergence of human pathogenic strains.</title>
        <authorList>
            <person name="Rohmer L."/>
            <person name="Fong C."/>
            <person name="Abmayr S."/>
            <person name="Wasnick M."/>
            <person name="Larson Freeman T.J."/>
            <person name="Radey M."/>
            <person name="Guina T."/>
            <person name="Svensson K."/>
            <person name="Hayden H.S."/>
            <person name="Jacobs M."/>
            <person name="Gallagher L.A."/>
            <person name="Manoil C."/>
            <person name="Ernst R.K."/>
            <person name="Drees B."/>
            <person name="Buckley D."/>
            <person name="Haugen E."/>
            <person name="Bovee D."/>
            <person name="Zhou Y."/>
            <person name="Chang J."/>
            <person name="Levy R."/>
            <person name="Lim R."/>
            <person name="Gillett W."/>
            <person name="Guenthener D."/>
            <person name="Kang A."/>
            <person name="Shaffer S.A."/>
            <person name="Taylor G."/>
            <person name="Chen J."/>
            <person name="Gallis B."/>
            <person name="D'Argenio D.A."/>
            <person name="Forsman M."/>
            <person name="Olson M.V."/>
            <person name="Goodlett D.R."/>
            <person name="Kaul R."/>
            <person name="Miller S.I."/>
            <person name="Brittnacher M.J."/>
        </authorList>
    </citation>
    <scope>NUCLEOTIDE SEQUENCE [LARGE SCALE GENOMIC DNA]</scope>
    <source>
        <strain>U112</strain>
    </source>
</reference>
<dbReference type="EMBL" id="CP000439">
    <property type="protein sequence ID" value="ABK89175.1"/>
    <property type="molecule type" value="Genomic_DNA"/>
</dbReference>
<dbReference type="RefSeq" id="WP_003038264.1">
    <property type="nucleotide sequence ID" value="NZ_CP009633.1"/>
</dbReference>
<dbReference type="SMR" id="A0Q4L0"/>
<dbReference type="KEGG" id="ftn:FTN_0266"/>
<dbReference type="KEGG" id="ftx:AW25_1776"/>
<dbReference type="BioCyc" id="FTUL401614:G1G75-277-MONOMER"/>
<dbReference type="Proteomes" id="UP000000762">
    <property type="component" value="Chromosome"/>
</dbReference>
<dbReference type="GO" id="GO:0005737">
    <property type="term" value="C:cytoplasm"/>
    <property type="evidence" value="ECO:0007669"/>
    <property type="project" value="UniProtKB-SubCell"/>
</dbReference>
<dbReference type="GO" id="GO:0005524">
    <property type="term" value="F:ATP binding"/>
    <property type="evidence" value="ECO:0007669"/>
    <property type="project" value="UniProtKB-UniRule"/>
</dbReference>
<dbReference type="GO" id="GO:0016887">
    <property type="term" value="F:ATP hydrolysis activity"/>
    <property type="evidence" value="ECO:0007669"/>
    <property type="project" value="InterPro"/>
</dbReference>
<dbReference type="GO" id="GO:0140662">
    <property type="term" value="F:ATP-dependent protein folding chaperone"/>
    <property type="evidence" value="ECO:0007669"/>
    <property type="project" value="InterPro"/>
</dbReference>
<dbReference type="GO" id="GO:0051082">
    <property type="term" value="F:unfolded protein binding"/>
    <property type="evidence" value="ECO:0007669"/>
    <property type="project" value="UniProtKB-UniRule"/>
</dbReference>
<dbReference type="CDD" id="cd16927">
    <property type="entry name" value="HATPase_Hsp90-like"/>
    <property type="match status" value="1"/>
</dbReference>
<dbReference type="FunFam" id="3.30.230.80:FF:000002">
    <property type="entry name" value="Molecular chaperone HtpG"/>
    <property type="match status" value="1"/>
</dbReference>
<dbReference type="FunFam" id="3.30.565.10:FF:000009">
    <property type="entry name" value="Molecular chaperone HtpG"/>
    <property type="match status" value="1"/>
</dbReference>
<dbReference type="Gene3D" id="3.30.230.80">
    <property type="match status" value="1"/>
</dbReference>
<dbReference type="Gene3D" id="3.40.50.11260">
    <property type="match status" value="1"/>
</dbReference>
<dbReference type="Gene3D" id="1.20.120.790">
    <property type="entry name" value="Heat shock protein 90, C-terminal domain"/>
    <property type="match status" value="1"/>
</dbReference>
<dbReference type="Gene3D" id="3.30.565.10">
    <property type="entry name" value="Histidine kinase-like ATPase, C-terminal domain"/>
    <property type="match status" value="1"/>
</dbReference>
<dbReference type="HAMAP" id="MF_00505">
    <property type="entry name" value="HSP90"/>
    <property type="match status" value="1"/>
</dbReference>
<dbReference type="InterPro" id="IPR036890">
    <property type="entry name" value="HATPase_C_sf"/>
</dbReference>
<dbReference type="InterPro" id="IPR019805">
    <property type="entry name" value="Heat_shock_protein_90_CS"/>
</dbReference>
<dbReference type="InterPro" id="IPR037196">
    <property type="entry name" value="HSP90_C"/>
</dbReference>
<dbReference type="InterPro" id="IPR001404">
    <property type="entry name" value="Hsp90_fam"/>
</dbReference>
<dbReference type="InterPro" id="IPR020575">
    <property type="entry name" value="Hsp90_N"/>
</dbReference>
<dbReference type="InterPro" id="IPR020568">
    <property type="entry name" value="Ribosomal_Su5_D2-typ_SF"/>
</dbReference>
<dbReference type="NCBIfam" id="NF003555">
    <property type="entry name" value="PRK05218.1"/>
    <property type="match status" value="1"/>
</dbReference>
<dbReference type="PANTHER" id="PTHR11528">
    <property type="entry name" value="HEAT SHOCK PROTEIN 90 FAMILY MEMBER"/>
    <property type="match status" value="1"/>
</dbReference>
<dbReference type="Pfam" id="PF13589">
    <property type="entry name" value="HATPase_c_3"/>
    <property type="match status" value="1"/>
</dbReference>
<dbReference type="Pfam" id="PF00183">
    <property type="entry name" value="HSP90"/>
    <property type="match status" value="1"/>
</dbReference>
<dbReference type="PIRSF" id="PIRSF002583">
    <property type="entry name" value="Hsp90"/>
    <property type="match status" value="1"/>
</dbReference>
<dbReference type="PRINTS" id="PR00775">
    <property type="entry name" value="HEATSHOCK90"/>
</dbReference>
<dbReference type="SMART" id="SM00387">
    <property type="entry name" value="HATPase_c"/>
    <property type="match status" value="1"/>
</dbReference>
<dbReference type="SUPFAM" id="SSF55874">
    <property type="entry name" value="ATPase domain of HSP90 chaperone/DNA topoisomerase II/histidine kinase"/>
    <property type="match status" value="1"/>
</dbReference>
<dbReference type="SUPFAM" id="SSF110942">
    <property type="entry name" value="HSP90 C-terminal domain"/>
    <property type="match status" value="1"/>
</dbReference>
<dbReference type="SUPFAM" id="SSF54211">
    <property type="entry name" value="Ribosomal protein S5 domain 2-like"/>
    <property type="match status" value="1"/>
</dbReference>
<dbReference type="PROSITE" id="PS00298">
    <property type="entry name" value="HSP90"/>
    <property type="match status" value="1"/>
</dbReference>
<protein>
    <recommendedName>
        <fullName evidence="1">Chaperone protein HtpG</fullName>
    </recommendedName>
    <alternativeName>
        <fullName evidence="1">Heat shock protein HtpG</fullName>
    </alternativeName>
    <alternativeName>
        <fullName evidence="1">High temperature protein G</fullName>
    </alternativeName>
</protein>
<organism>
    <name type="scientific">Francisella tularensis subsp. novicida (strain U112)</name>
    <dbReference type="NCBI Taxonomy" id="401614"/>
    <lineage>
        <taxon>Bacteria</taxon>
        <taxon>Pseudomonadati</taxon>
        <taxon>Pseudomonadota</taxon>
        <taxon>Gammaproteobacteria</taxon>
        <taxon>Thiotrichales</taxon>
        <taxon>Francisellaceae</taxon>
        <taxon>Francisella</taxon>
    </lineage>
</organism>
<feature type="chain" id="PRO_1000014918" description="Chaperone protein HtpG">
    <location>
        <begin position="1"/>
        <end position="628"/>
    </location>
</feature>
<feature type="region of interest" description="A; substrate-binding" evidence="1">
    <location>
        <begin position="1"/>
        <end position="337"/>
    </location>
</feature>
<feature type="region of interest" description="B" evidence="1">
    <location>
        <begin position="338"/>
        <end position="554"/>
    </location>
</feature>
<feature type="region of interest" description="C" evidence="1">
    <location>
        <begin position="555"/>
        <end position="628"/>
    </location>
</feature>
<name>HTPG_FRATN</name>
<evidence type="ECO:0000255" key="1">
    <source>
        <dbReference type="HAMAP-Rule" id="MF_00505"/>
    </source>
</evidence>
<proteinExistence type="inferred from homology"/>
<keyword id="KW-0067">ATP-binding</keyword>
<keyword id="KW-0143">Chaperone</keyword>
<keyword id="KW-0963">Cytoplasm</keyword>
<keyword id="KW-0547">Nucleotide-binding</keyword>
<keyword id="KW-0346">Stress response</keyword>